<accession>Q83QL1</accession>
<keyword id="KW-0067">ATP-binding</keyword>
<keyword id="KW-0315">Glutamine amidotransferase</keyword>
<keyword id="KW-0332">GMP biosynthesis</keyword>
<keyword id="KW-0436">Ligase</keyword>
<keyword id="KW-0547">Nucleotide-binding</keyword>
<keyword id="KW-0658">Purine biosynthesis</keyword>
<keyword id="KW-1185">Reference proteome</keyword>
<reference key="1">
    <citation type="journal article" date="2002" name="Nucleic Acids Res.">
        <title>Genome sequence of Shigella flexneri 2a: insights into pathogenicity through comparison with genomes of Escherichia coli K12 and O157.</title>
        <authorList>
            <person name="Jin Q."/>
            <person name="Yuan Z."/>
            <person name="Xu J."/>
            <person name="Wang Y."/>
            <person name="Shen Y."/>
            <person name="Lu W."/>
            <person name="Wang J."/>
            <person name="Liu H."/>
            <person name="Yang J."/>
            <person name="Yang F."/>
            <person name="Zhang X."/>
            <person name="Zhang J."/>
            <person name="Yang G."/>
            <person name="Wu H."/>
            <person name="Qu D."/>
            <person name="Dong J."/>
            <person name="Sun L."/>
            <person name="Xue Y."/>
            <person name="Zhao A."/>
            <person name="Gao Y."/>
            <person name="Zhu J."/>
            <person name="Kan B."/>
            <person name="Ding K."/>
            <person name="Chen S."/>
            <person name="Cheng H."/>
            <person name="Yao Z."/>
            <person name="He B."/>
            <person name="Chen R."/>
            <person name="Ma D."/>
            <person name="Qiang B."/>
            <person name="Wen Y."/>
            <person name="Hou Y."/>
            <person name="Yu J."/>
        </authorList>
    </citation>
    <scope>NUCLEOTIDE SEQUENCE [LARGE SCALE GENOMIC DNA]</scope>
    <source>
        <strain>301 / Serotype 2a</strain>
    </source>
</reference>
<reference key="2">
    <citation type="journal article" date="2003" name="Infect. Immun.">
        <title>Complete genome sequence and comparative genomics of Shigella flexneri serotype 2a strain 2457T.</title>
        <authorList>
            <person name="Wei J."/>
            <person name="Goldberg M.B."/>
            <person name="Burland V."/>
            <person name="Venkatesan M.M."/>
            <person name="Deng W."/>
            <person name="Fournier G."/>
            <person name="Mayhew G.F."/>
            <person name="Plunkett G. III"/>
            <person name="Rose D.J."/>
            <person name="Darling A."/>
            <person name="Mau B."/>
            <person name="Perna N.T."/>
            <person name="Payne S.M."/>
            <person name="Runyen-Janecky L.J."/>
            <person name="Zhou S."/>
            <person name="Schwartz D.C."/>
            <person name="Blattner F.R."/>
        </authorList>
    </citation>
    <scope>NUCLEOTIDE SEQUENCE [LARGE SCALE GENOMIC DNA]</scope>
    <source>
        <strain>ATCC 700930 / 2457T / Serotype 2a</strain>
    </source>
</reference>
<dbReference type="EC" id="6.3.5.2" evidence="1"/>
<dbReference type="EMBL" id="AE005674">
    <property type="protein sequence ID" value="AAN44053.1"/>
    <property type="molecule type" value="Genomic_DNA"/>
</dbReference>
<dbReference type="EMBL" id="AE014073">
    <property type="protein sequence ID" value="AAP17880.1"/>
    <property type="molecule type" value="Genomic_DNA"/>
</dbReference>
<dbReference type="RefSeq" id="NP_708346.1">
    <property type="nucleotide sequence ID" value="NC_004337.2"/>
</dbReference>
<dbReference type="RefSeq" id="WP_000138258.1">
    <property type="nucleotide sequence ID" value="NZ_WPGW01000078.1"/>
</dbReference>
<dbReference type="SMR" id="Q83QL1"/>
<dbReference type="STRING" id="198214.SF2553"/>
<dbReference type="MEROPS" id="C26.957"/>
<dbReference type="PaxDb" id="198214-SF2553"/>
<dbReference type="GeneID" id="1025630"/>
<dbReference type="KEGG" id="sfl:SF2553"/>
<dbReference type="KEGG" id="sfx:S2725"/>
<dbReference type="PATRIC" id="fig|198214.7.peg.3051"/>
<dbReference type="HOGENOM" id="CLU_014340_0_5_6"/>
<dbReference type="UniPathway" id="UPA00189">
    <property type="reaction ID" value="UER00296"/>
</dbReference>
<dbReference type="Proteomes" id="UP000001006">
    <property type="component" value="Chromosome"/>
</dbReference>
<dbReference type="Proteomes" id="UP000002673">
    <property type="component" value="Chromosome"/>
</dbReference>
<dbReference type="GO" id="GO:0005829">
    <property type="term" value="C:cytosol"/>
    <property type="evidence" value="ECO:0007669"/>
    <property type="project" value="TreeGrafter"/>
</dbReference>
<dbReference type="GO" id="GO:0005524">
    <property type="term" value="F:ATP binding"/>
    <property type="evidence" value="ECO:0007669"/>
    <property type="project" value="UniProtKB-UniRule"/>
</dbReference>
<dbReference type="GO" id="GO:0003921">
    <property type="term" value="F:GMP synthase activity"/>
    <property type="evidence" value="ECO:0007669"/>
    <property type="project" value="InterPro"/>
</dbReference>
<dbReference type="CDD" id="cd01742">
    <property type="entry name" value="GATase1_GMP_Synthase"/>
    <property type="match status" value="1"/>
</dbReference>
<dbReference type="CDD" id="cd01997">
    <property type="entry name" value="GMP_synthase_C"/>
    <property type="match status" value="1"/>
</dbReference>
<dbReference type="FunFam" id="3.30.300.10:FF:000002">
    <property type="entry name" value="GMP synthase [glutamine-hydrolyzing]"/>
    <property type="match status" value="1"/>
</dbReference>
<dbReference type="FunFam" id="3.40.50.620:FF:000001">
    <property type="entry name" value="GMP synthase [glutamine-hydrolyzing]"/>
    <property type="match status" value="1"/>
</dbReference>
<dbReference type="FunFam" id="3.40.50.880:FF:000001">
    <property type="entry name" value="GMP synthase [glutamine-hydrolyzing]"/>
    <property type="match status" value="1"/>
</dbReference>
<dbReference type="Gene3D" id="3.30.300.10">
    <property type="match status" value="1"/>
</dbReference>
<dbReference type="Gene3D" id="3.40.50.880">
    <property type="match status" value="1"/>
</dbReference>
<dbReference type="Gene3D" id="3.40.50.620">
    <property type="entry name" value="HUPs"/>
    <property type="match status" value="1"/>
</dbReference>
<dbReference type="HAMAP" id="MF_00344">
    <property type="entry name" value="GMP_synthase"/>
    <property type="match status" value="1"/>
</dbReference>
<dbReference type="InterPro" id="IPR029062">
    <property type="entry name" value="Class_I_gatase-like"/>
</dbReference>
<dbReference type="InterPro" id="IPR017926">
    <property type="entry name" value="GATASE"/>
</dbReference>
<dbReference type="InterPro" id="IPR001674">
    <property type="entry name" value="GMP_synth_C"/>
</dbReference>
<dbReference type="InterPro" id="IPR004739">
    <property type="entry name" value="GMP_synth_GATase"/>
</dbReference>
<dbReference type="InterPro" id="IPR022955">
    <property type="entry name" value="GMP_synthase"/>
</dbReference>
<dbReference type="InterPro" id="IPR025777">
    <property type="entry name" value="GMPS_ATP_PPase_dom"/>
</dbReference>
<dbReference type="InterPro" id="IPR022310">
    <property type="entry name" value="NAD/GMP_synthase"/>
</dbReference>
<dbReference type="InterPro" id="IPR014729">
    <property type="entry name" value="Rossmann-like_a/b/a_fold"/>
</dbReference>
<dbReference type="NCBIfam" id="TIGR00884">
    <property type="entry name" value="guaA_Cterm"/>
    <property type="match status" value="1"/>
</dbReference>
<dbReference type="NCBIfam" id="TIGR00888">
    <property type="entry name" value="guaA_Nterm"/>
    <property type="match status" value="1"/>
</dbReference>
<dbReference type="NCBIfam" id="NF000848">
    <property type="entry name" value="PRK00074.1"/>
    <property type="match status" value="1"/>
</dbReference>
<dbReference type="PANTHER" id="PTHR11922:SF2">
    <property type="entry name" value="GMP SYNTHASE [GLUTAMINE-HYDROLYZING]"/>
    <property type="match status" value="1"/>
</dbReference>
<dbReference type="PANTHER" id="PTHR11922">
    <property type="entry name" value="GMP SYNTHASE-RELATED"/>
    <property type="match status" value="1"/>
</dbReference>
<dbReference type="Pfam" id="PF00117">
    <property type="entry name" value="GATase"/>
    <property type="match status" value="1"/>
</dbReference>
<dbReference type="Pfam" id="PF00958">
    <property type="entry name" value="GMP_synt_C"/>
    <property type="match status" value="1"/>
</dbReference>
<dbReference type="Pfam" id="PF02540">
    <property type="entry name" value="NAD_synthase"/>
    <property type="match status" value="1"/>
</dbReference>
<dbReference type="PRINTS" id="PR00097">
    <property type="entry name" value="ANTSNTHASEII"/>
</dbReference>
<dbReference type="PRINTS" id="PR00099">
    <property type="entry name" value="CPSGATASE"/>
</dbReference>
<dbReference type="PRINTS" id="PR00096">
    <property type="entry name" value="GATASE"/>
</dbReference>
<dbReference type="SUPFAM" id="SSF52402">
    <property type="entry name" value="Adenine nucleotide alpha hydrolases-like"/>
    <property type="match status" value="1"/>
</dbReference>
<dbReference type="SUPFAM" id="SSF52317">
    <property type="entry name" value="Class I glutamine amidotransferase-like"/>
    <property type="match status" value="1"/>
</dbReference>
<dbReference type="SUPFAM" id="SSF54810">
    <property type="entry name" value="GMP synthetase C-terminal dimerisation domain"/>
    <property type="match status" value="1"/>
</dbReference>
<dbReference type="PROSITE" id="PS51273">
    <property type="entry name" value="GATASE_TYPE_1"/>
    <property type="match status" value="1"/>
</dbReference>
<dbReference type="PROSITE" id="PS51553">
    <property type="entry name" value="GMPS_ATP_PPASE"/>
    <property type="match status" value="1"/>
</dbReference>
<evidence type="ECO:0000255" key="1">
    <source>
        <dbReference type="HAMAP-Rule" id="MF_00344"/>
    </source>
</evidence>
<comment type="function">
    <text evidence="1">Catalyzes the synthesis of GMP from XMP.</text>
</comment>
<comment type="catalytic activity">
    <reaction evidence="1">
        <text>XMP + L-glutamine + ATP + H2O = GMP + L-glutamate + AMP + diphosphate + 2 H(+)</text>
        <dbReference type="Rhea" id="RHEA:11680"/>
        <dbReference type="ChEBI" id="CHEBI:15377"/>
        <dbReference type="ChEBI" id="CHEBI:15378"/>
        <dbReference type="ChEBI" id="CHEBI:29985"/>
        <dbReference type="ChEBI" id="CHEBI:30616"/>
        <dbReference type="ChEBI" id="CHEBI:33019"/>
        <dbReference type="ChEBI" id="CHEBI:57464"/>
        <dbReference type="ChEBI" id="CHEBI:58115"/>
        <dbReference type="ChEBI" id="CHEBI:58359"/>
        <dbReference type="ChEBI" id="CHEBI:456215"/>
        <dbReference type="EC" id="6.3.5.2"/>
    </reaction>
</comment>
<comment type="pathway">
    <text evidence="1">Purine metabolism; GMP biosynthesis; GMP from XMP (L-Gln route): step 1/1.</text>
</comment>
<comment type="subunit">
    <text evidence="1">Homodimer.</text>
</comment>
<sequence>MTENIHKHRILILDFGSQYTQLVARRVRELGVYCELWAWDVTEAQIRDFNPSGIILSGGPESTTEENSPRAPQYVFEAGVPIFGVCYGMQTMAMQLGGHVEASNEREFGYAQVEVVNDSALVRGIEDALTADGKPLLDVWMSHGDKVTAIPSDFVTVASTESCPFAIMANEEKRFYGVQFHPEVTHTRQGMRMLERFVRDICQCEALWTPAKIIDDAVARIREQVGDDKVILGLSGGVDSSVTAMLLHRAIGKNLTCVFVDNGLLRLNEAEQVLDMFGDHFGLNIVHVPAEDRFLSALAGENDPEAKRKIIGRVFVEVFDEEALKLEDVKWLAQGTIYPDVIESAASATGKAHVIKSHHNVGGLPKEMKMGLVEPLKELFKDEVRKIGLELGLPYDMLYRHPFPGPGLGVRVLGEVKKEYCDLLRRADAIFIEELRKADLYDKVSQAFTVFLPVRSVGVMGDGRKYDWVVSLRAVETIDFMTAHWAHLPYDFLGRVSNRIINEVNGISRVVYDISGKPPATIEWE</sequence>
<name>GUAA_SHIFL</name>
<protein>
    <recommendedName>
        <fullName evidence="1">GMP synthase [glutamine-hydrolyzing]</fullName>
        <ecNumber evidence="1">6.3.5.2</ecNumber>
    </recommendedName>
    <alternativeName>
        <fullName evidence="1">GMP synthetase</fullName>
    </alternativeName>
    <alternativeName>
        <fullName evidence="1">Glutamine amidotransferase</fullName>
    </alternativeName>
</protein>
<proteinExistence type="inferred from homology"/>
<organism>
    <name type="scientific">Shigella flexneri</name>
    <dbReference type="NCBI Taxonomy" id="623"/>
    <lineage>
        <taxon>Bacteria</taxon>
        <taxon>Pseudomonadati</taxon>
        <taxon>Pseudomonadota</taxon>
        <taxon>Gammaproteobacteria</taxon>
        <taxon>Enterobacterales</taxon>
        <taxon>Enterobacteriaceae</taxon>
        <taxon>Shigella</taxon>
    </lineage>
</organism>
<feature type="chain" id="PRO_0000140173" description="GMP synthase [glutamine-hydrolyzing]">
    <location>
        <begin position="1"/>
        <end position="525"/>
    </location>
</feature>
<feature type="domain" description="Glutamine amidotransferase type-1" evidence="1">
    <location>
        <begin position="9"/>
        <end position="207"/>
    </location>
</feature>
<feature type="domain" description="GMPS ATP-PPase" evidence="1">
    <location>
        <begin position="208"/>
        <end position="400"/>
    </location>
</feature>
<feature type="active site" description="Nucleophile" evidence="1">
    <location>
        <position position="86"/>
    </location>
</feature>
<feature type="active site" evidence="1">
    <location>
        <position position="181"/>
    </location>
</feature>
<feature type="active site" evidence="1">
    <location>
        <position position="183"/>
    </location>
</feature>
<feature type="binding site" evidence="1">
    <location>
        <begin position="235"/>
        <end position="241"/>
    </location>
    <ligand>
        <name>ATP</name>
        <dbReference type="ChEBI" id="CHEBI:30616"/>
    </ligand>
</feature>
<gene>
    <name evidence="1" type="primary">guaA</name>
    <name type="ordered locus">SF2553</name>
    <name type="ordered locus">S2725</name>
</gene>